<organismHost>
    <name type="scientific">Homo sapiens</name>
    <name type="common">Human</name>
    <dbReference type="NCBI Taxonomy" id="9606"/>
</organismHost>
<name>VE1_HPV07</name>
<protein>
    <recommendedName>
        <fullName evidence="1">Replication protein E1</fullName>
        <ecNumber evidence="1">5.6.2.4</ecNumber>
    </recommendedName>
    <alternativeName>
        <fullName evidence="1">ATP-dependent helicase E1</fullName>
    </alternativeName>
    <alternativeName>
        <fullName evidence="1">DNA 3'-5' helicase E1</fullName>
    </alternativeName>
</protein>
<comment type="function">
    <text evidence="1">ATP-dependent DNA 3'-5' helicase required for initiation of viral DNA replication. It forms a complex with the viral E2 protein. The E1-E2 complex binds to the replication origin which contains binding sites for both proteins. During the initial step, a dimer of E1 interacts with a dimer of protein E2 leading to a complex that binds the viral origin of replication with high specificity. Then, a second dimer of E1 displaces the E2 dimer in an ATP-dependent manner to form the E1 tetramer. Following this, two E1 monomers are added to each half of the site, which results in the formation of two E1 trimers on the viral ori. Subsequently, two hexamers will be created. The double hexamer acts as a bi-directional helicase machinery and unwinds the viral DNA and then recruits the host DNA polymerase to start replication.</text>
</comment>
<comment type="catalytic activity">
    <reaction evidence="1">
        <text>Couples ATP hydrolysis with the unwinding of duplex DNA by translocating in the 3'-5' direction.</text>
        <dbReference type="EC" id="5.6.2.4"/>
    </reaction>
</comment>
<comment type="catalytic activity">
    <reaction evidence="1">
        <text>ATP + H2O = ADP + phosphate + H(+)</text>
        <dbReference type="Rhea" id="RHEA:13065"/>
        <dbReference type="ChEBI" id="CHEBI:15377"/>
        <dbReference type="ChEBI" id="CHEBI:15378"/>
        <dbReference type="ChEBI" id="CHEBI:30616"/>
        <dbReference type="ChEBI" id="CHEBI:43474"/>
        <dbReference type="ChEBI" id="CHEBI:456216"/>
        <dbReference type="EC" id="5.6.2.4"/>
    </reaction>
</comment>
<comment type="subunit">
    <text evidence="1">Can form hexamers. Interacts with E2 protein; this interaction increases E1 DNA binding specificity. Interacts with host DNA polymerase subunit POLA2. Interacts with host single stranded DNA-binding protein RPA1. Interacts with host TOP1; this interaction stimulates the enzymatic activity of TOP1.</text>
</comment>
<comment type="subcellular location">
    <subcellularLocation>
        <location evidence="1">Host nucleus</location>
    </subcellularLocation>
</comment>
<comment type="PTM">
    <text evidence="1">Phosphorylated.</text>
</comment>
<comment type="PTM">
    <text evidence="1">Sumoylated.</text>
</comment>
<comment type="similarity">
    <text evidence="1">Belongs to the papillomaviridae E1 protein family.</text>
</comment>
<keyword id="KW-0067">ATP-binding</keyword>
<keyword id="KW-0235">DNA replication</keyword>
<keyword id="KW-0238">DNA-binding</keyword>
<keyword id="KW-0244">Early protein</keyword>
<keyword id="KW-0347">Helicase</keyword>
<keyword id="KW-1048">Host nucleus</keyword>
<keyword id="KW-0378">Hydrolase</keyword>
<keyword id="KW-0413">Isomerase</keyword>
<keyword id="KW-1017">Isopeptide bond</keyword>
<keyword id="KW-0547">Nucleotide-binding</keyword>
<keyword id="KW-0597">Phosphoprotein</keyword>
<keyword id="KW-1185">Reference proteome</keyword>
<keyword id="KW-0832">Ubl conjugation</keyword>
<feature type="chain" id="PRO_0000133105" description="Replication protein E1">
    <location>
        <begin position="1"/>
        <end position="646"/>
    </location>
</feature>
<feature type="domain" description="SF3 helicase" evidence="1">
    <location>
        <begin position="450"/>
        <end position="600"/>
    </location>
</feature>
<feature type="region of interest" description="Disordered" evidence="2">
    <location>
        <begin position="138"/>
        <end position="166"/>
    </location>
</feature>
<feature type="region of interest" description="DNA-binding region" evidence="1">
    <location>
        <begin position="186"/>
        <end position="352"/>
    </location>
</feature>
<feature type="short sequence motif" description="Nuclear localization signal" evidence="1">
    <location>
        <begin position="86"/>
        <end position="88"/>
    </location>
</feature>
<feature type="short sequence motif" description="Nuclear export signal" evidence="1">
    <location>
        <begin position="108"/>
        <end position="117"/>
    </location>
</feature>
<feature type="compositionally biased region" description="Acidic residues" evidence="2">
    <location>
        <begin position="149"/>
        <end position="159"/>
    </location>
</feature>
<feature type="binding site" evidence="1">
    <location>
        <begin position="476"/>
        <end position="483"/>
    </location>
    <ligand>
        <name>ATP</name>
        <dbReference type="ChEBI" id="CHEBI:30616"/>
    </ligand>
</feature>
<feature type="modified residue" description="Phosphoserine; by host" evidence="1">
    <location>
        <position position="91"/>
    </location>
</feature>
<feature type="modified residue" description="Phosphoserine; by host" evidence="1">
    <location>
        <position position="95"/>
    </location>
</feature>
<feature type="modified residue" description="Phosphoserine; by host" evidence="1">
    <location>
        <position position="109"/>
    </location>
</feature>
<feature type="cross-link" description="Glycyl lysine isopeptide (Lys-Gly) (interchain with G-Cter in SUMO)" evidence="1">
    <location>
        <position position="557"/>
    </location>
</feature>
<organism>
    <name type="scientific">Human papillomavirus 7</name>
    <dbReference type="NCBI Taxonomy" id="10620"/>
    <lineage>
        <taxon>Viruses</taxon>
        <taxon>Monodnaviria</taxon>
        <taxon>Shotokuvirae</taxon>
        <taxon>Cossaviricota</taxon>
        <taxon>Papovaviricetes</taxon>
        <taxon>Zurhausenvirales</taxon>
        <taxon>Papillomaviridae</taxon>
        <taxon>Firstpapillomavirinae</taxon>
        <taxon>Alphapapillomavirus</taxon>
        <taxon>Alphapapillomavirus 8</taxon>
    </lineage>
</organism>
<reference key="1">
    <citation type="journal article" date="1994" name="Curr. Top. Microbiol. Immunol.">
        <title>Primer-directed sequencing of human papillomavirus types.</title>
        <authorList>
            <person name="Delius H."/>
            <person name="Hofmann B."/>
        </authorList>
    </citation>
    <scope>NUCLEOTIDE SEQUENCE [GENOMIC DNA]</scope>
</reference>
<reference key="2">
    <citation type="journal article" date="1992" name="J. Virol.">
        <title>Phylogenetic analysis of 48 papillomavirus types and 28 subtypes and variants: a showcase for the molecular evolution of DNA viruses.</title>
        <authorList>
            <person name="Chan S.-Y."/>
            <person name="Bernard H.U."/>
            <person name="Ong C.K."/>
            <person name="Chan S.P."/>
            <person name="Birgit H."/>
            <person name="Delius H."/>
        </authorList>
    </citation>
    <scope>NUCLEOTIDE SEQUENCE [GENOMIC DNA] OF 376-427</scope>
</reference>
<dbReference type="EC" id="5.6.2.4" evidence="1"/>
<dbReference type="EMBL" id="X74463">
    <property type="protein sequence ID" value="CAA52478.1"/>
    <property type="molecule type" value="Genomic_DNA"/>
</dbReference>
<dbReference type="EMBL" id="M96314">
    <property type="protein sequence ID" value="AAA47003.1"/>
    <property type="molecule type" value="Genomic_DNA"/>
</dbReference>
<dbReference type="PIR" id="S36586">
    <property type="entry name" value="S36586"/>
</dbReference>
<dbReference type="RefSeq" id="NP_041856.1">
    <property type="nucleotide sequence ID" value="NC_001595.1"/>
</dbReference>
<dbReference type="SMR" id="Q05133"/>
<dbReference type="GeneID" id="1489470"/>
<dbReference type="KEGG" id="vg:1489470"/>
<dbReference type="OrthoDB" id="4795at10239"/>
<dbReference type="Proteomes" id="UP000008226">
    <property type="component" value="Genome"/>
</dbReference>
<dbReference type="GO" id="GO:0042025">
    <property type="term" value="C:host cell nucleus"/>
    <property type="evidence" value="ECO:0007669"/>
    <property type="project" value="UniProtKB-SubCell"/>
</dbReference>
<dbReference type="GO" id="GO:0005524">
    <property type="term" value="F:ATP binding"/>
    <property type="evidence" value="ECO:0007669"/>
    <property type="project" value="UniProtKB-UniRule"/>
</dbReference>
<dbReference type="GO" id="GO:0016887">
    <property type="term" value="F:ATP hydrolysis activity"/>
    <property type="evidence" value="ECO:0007669"/>
    <property type="project" value="RHEA"/>
</dbReference>
<dbReference type="GO" id="GO:0003677">
    <property type="term" value="F:DNA binding"/>
    <property type="evidence" value="ECO:0007669"/>
    <property type="project" value="UniProtKB-UniRule"/>
</dbReference>
<dbReference type="GO" id="GO:0003678">
    <property type="term" value="F:DNA helicase activity"/>
    <property type="evidence" value="ECO:0007669"/>
    <property type="project" value="UniProtKB-UniRule"/>
</dbReference>
<dbReference type="GO" id="GO:0006260">
    <property type="term" value="P:DNA replication"/>
    <property type="evidence" value="ECO:0007669"/>
    <property type="project" value="UniProtKB-UniRule"/>
</dbReference>
<dbReference type="Gene3D" id="3.40.1310.10">
    <property type="match status" value="1"/>
</dbReference>
<dbReference type="Gene3D" id="3.40.50.300">
    <property type="entry name" value="P-loop containing nucleotide triphosphate hydrolases"/>
    <property type="match status" value="1"/>
</dbReference>
<dbReference type="Gene3D" id="1.10.10.510">
    <property type="entry name" value="Zinc finger, large T-antigen D1 domain"/>
    <property type="match status" value="1"/>
</dbReference>
<dbReference type="HAMAP" id="MF_04000">
    <property type="entry name" value="PPV_E1"/>
    <property type="match status" value="1"/>
</dbReference>
<dbReference type="InterPro" id="IPR014015">
    <property type="entry name" value="Helicase_SF3_DNA-vir"/>
</dbReference>
<dbReference type="InterPro" id="IPR027417">
    <property type="entry name" value="P-loop_NTPase"/>
</dbReference>
<dbReference type="InterPro" id="IPR001177">
    <property type="entry name" value="PPV_DNA_helicase_E1_C"/>
</dbReference>
<dbReference type="InterPro" id="IPR014000">
    <property type="entry name" value="PPV_DNA_helicase_E1_N"/>
</dbReference>
<dbReference type="InterPro" id="IPR046832">
    <property type="entry name" value="PPV_E1_DBD"/>
</dbReference>
<dbReference type="InterPro" id="IPR046935">
    <property type="entry name" value="PPV_E1_DBD_sf"/>
</dbReference>
<dbReference type="InterPro" id="IPR016393">
    <property type="entry name" value="Rep_E1_papillomaV"/>
</dbReference>
<dbReference type="InterPro" id="IPR037102">
    <property type="entry name" value="Znf_lg_T-Ag_D1_dom_sf"/>
</dbReference>
<dbReference type="Pfam" id="PF00519">
    <property type="entry name" value="PPV_E1_C"/>
    <property type="match status" value="1"/>
</dbReference>
<dbReference type="Pfam" id="PF20450">
    <property type="entry name" value="PPV_E1_DBD"/>
    <property type="match status" value="1"/>
</dbReference>
<dbReference type="Pfam" id="PF00524">
    <property type="entry name" value="PPV_E1_N"/>
    <property type="match status" value="1"/>
</dbReference>
<dbReference type="PIRSF" id="PIRSF003383">
    <property type="entry name" value="Rep_E1_papillomaV"/>
    <property type="match status" value="1"/>
</dbReference>
<dbReference type="SUPFAM" id="SSF55464">
    <property type="entry name" value="Origin of replication-binding domain, RBD-like"/>
    <property type="match status" value="1"/>
</dbReference>
<dbReference type="SUPFAM" id="SSF52540">
    <property type="entry name" value="P-loop containing nucleoside triphosphate hydrolases"/>
    <property type="match status" value="1"/>
</dbReference>
<dbReference type="PROSITE" id="PS51206">
    <property type="entry name" value="SF3_HELICASE_1"/>
    <property type="match status" value="1"/>
</dbReference>
<proteinExistence type="inferred from homology"/>
<gene>
    <name evidence="1" type="primary">E1</name>
</gene>
<evidence type="ECO:0000255" key="1">
    <source>
        <dbReference type="HAMAP-Rule" id="MF_04000"/>
    </source>
</evidence>
<evidence type="ECO:0000256" key="2">
    <source>
        <dbReference type="SAM" id="MobiDB-lite"/>
    </source>
</evidence>
<sequence length="646" mass="72470">MADDSGTEDVGSGCSGWFLVEAVVDKQTGDVVSEDEDEDAIEDSGYDMVDFINDTVVSEHEELSNAQALLHAQQTCADAVELCELKRKYISPYVSPIQCSEPSVDGDLSPRLHAIKLGGGKKAKRRLFERLEQRDSGYGYSQVETTETQVEEEHGEPEGIEGGSGRAATVETEAVEVLEESSDVIQQLSPRTQVVELFKCKDLNAKLCGKFKELFGVGFHDLVRQFKSDKSTCTDWVYAVFGVNPTIAEGFHTLLKGQALYLHTQWTTCRWGMVLLALCRYKVAKNRETVVRQLAKMLNVPDNQLMVQPPKLQSSAAALFWFRSGMGNGSEVSGTTPEWIAKQTMLEHSFAEAQFSLTQMVQWAYDNGHTDECEIAYYYAQIADIDANAAAFLKSNNQAKYVRDCAAMCKHYRLAEMRRMSMADWIKHRGEKCDEGDWKPIVKLLRYQHIDIIVFLAALKKWLHGIPKKNCICIVGPPDTGKSCFGMSLMHFLQGTIISFVNSCSHFWLQSLVDAKVAMLDDVTSACWAYMDTHMRNLLDGNPTSIDRKHKSLAVIKCPPLLLTSNINIKHDCKYQYLQSRVTVFEFPNPFPFDSNGNAVYELSDANWNSFFKRLASSLELQTTEDEDGETSQAPRFVPGTVVRTL</sequence>
<accession>Q05133</accession>